<organism>
    <name type="scientific">Streptococcus pyogenes serotype M3 (strain SSI-1)</name>
    <dbReference type="NCBI Taxonomy" id="193567"/>
    <lineage>
        <taxon>Bacteria</taxon>
        <taxon>Bacillati</taxon>
        <taxon>Bacillota</taxon>
        <taxon>Bacilli</taxon>
        <taxon>Lactobacillales</taxon>
        <taxon>Streptococcaceae</taxon>
        <taxon>Streptococcus</taxon>
    </lineage>
</organism>
<name>PRMA_STRPQ</name>
<proteinExistence type="inferred from homology"/>
<accession>P0DD19</accession>
<accession>Q877Y7</accession>
<accession>Q8K5Q9</accession>
<protein>
    <recommendedName>
        <fullName evidence="1">Ribosomal protein L11 methyltransferase</fullName>
        <shortName evidence="1">L11 Mtase</shortName>
        <ecNumber evidence="1">2.1.1.-</ecNumber>
    </recommendedName>
</protein>
<dbReference type="EC" id="2.1.1.-" evidence="1"/>
<dbReference type="EMBL" id="BA000034">
    <property type="protein sequence ID" value="BAC64805.1"/>
    <property type="molecule type" value="Genomic_DNA"/>
</dbReference>
<dbReference type="RefSeq" id="WP_011055040.1">
    <property type="nucleotide sequence ID" value="NC_004606.1"/>
</dbReference>
<dbReference type="SMR" id="P0DD19"/>
<dbReference type="KEGG" id="sps:SPs1710"/>
<dbReference type="HOGENOM" id="CLU_049382_0_1_9"/>
<dbReference type="GO" id="GO:0005737">
    <property type="term" value="C:cytoplasm"/>
    <property type="evidence" value="ECO:0007669"/>
    <property type="project" value="UniProtKB-SubCell"/>
</dbReference>
<dbReference type="GO" id="GO:0016279">
    <property type="term" value="F:protein-lysine N-methyltransferase activity"/>
    <property type="evidence" value="ECO:0007669"/>
    <property type="project" value="RHEA"/>
</dbReference>
<dbReference type="GO" id="GO:0032259">
    <property type="term" value="P:methylation"/>
    <property type="evidence" value="ECO:0007669"/>
    <property type="project" value="UniProtKB-KW"/>
</dbReference>
<dbReference type="CDD" id="cd02440">
    <property type="entry name" value="AdoMet_MTases"/>
    <property type="match status" value="1"/>
</dbReference>
<dbReference type="Gene3D" id="3.40.50.150">
    <property type="entry name" value="Vaccinia Virus protein VP39"/>
    <property type="match status" value="1"/>
</dbReference>
<dbReference type="HAMAP" id="MF_00735">
    <property type="entry name" value="Methyltr_PrmA"/>
    <property type="match status" value="1"/>
</dbReference>
<dbReference type="InterPro" id="IPR050078">
    <property type="entry name" value="Ribosomal_L11_MeTrfase_PrmA"/>
</dbReference>
<dbReference type="InterPro" id="IPR004498">
    <property type="entry name" value="Ribosomal_PrmA_MeTrfase"/>
</dbReference>
<dbReference type="InterPro" id="IPR029063">
    <property type="entry name" value="SAM-dependent_MTases_sf"/>
</dbReference>
<dbReference type="NCBIfam" id="TIGR00406">
    <property type="entry name" value="prmA"/>
    <property type="match status" value="1"/>
</dbReference>
<dbReference type="PANTHER" id="PTHR43648">
    <property type="entry name" value="ELECTRON TRANSFER FLAVOPROTEIN BETA SUBUNIT LYSINE METHYLTRANSFERASE"/>
    <property type="match status" value="1"/>
</dbReference>
<dbReference type="PANTHER" id="PTHR43648:SF1">
    <property type="entry name" value="ELECTRON TRANSFER FLAVOPROTEIN BETA SUBUNIT LYSINE METHYLTRANSFERASE"/>
    <property type="match status" value="1"/>
</dbReference>
<dbReference type="Pfam" id="PF06325">
    <property type="entry name" value="PrmA"/>
    <property type="match status" value="1"/>
</dbReference>
<dbReference type="PIRSF" id="PIRSF000401">
    <property type="entry name" value="RPL11_MTase"/>
    <property type="match status" value="1"/>
</dbReference>
<dbReference type="SUPFAM" id="SSF53335">
    <property type="entry name" value="S-adenosyl-L-methionine-dependent methyltransferases"/>
    <property type="match status" value="1"/>
</dbReference>
<reference key="1">
    <citation type="journal article" date="2003" name="Genome Res.">
        <title>Genome sequence of an M3 strain of Streptococcus pyogenes reveals a large-scale genomic rearrangement in invasive strains and new insights into phage evolution.</title>
        <authorList>
            <person name="Nakagawa I."/>
            <person name="Kurokawa K."/>
            <person name="Yamashita A."/>
            <person name="Nakata M."/>
            <person name="Tomiyasu Y."/>
            <person name="Okahashi N."/>
            <person name="Kawabata S."/>
            <person name="Yamazaki K."/>
            <person name="Shiba T."/>
            <person name="Yasunaga T."/>
            <person name="Hayashi H."/>
            <person name="Hattori M."/>
            <person name="Hamada S."/>
        </authorList>
    </citation>
    <scope>NUCLEOTIDE SEQUENCE [LARGE SCALE GENOMIC DNA]</scope>
    <source>
        <strain>SSI-1</strain>
    </source>
</reference>
<sequence>METWQEVTVHVHRDAQEAVSNLLIETGSQGVAIADSADYIGQKDRFGELYPDVEQSDMIAITAYYPSSTNLADVIATINEQLAELASFGLQVGQVTVDSQELAEEDWADNWKKYYEPARITHDLTIVPSWTDYDASAGEKVIKLDPGMAFGTGTHPTTKMSLFALEQILRGGETVIDVGTGSGVLSIASSLLGAKTIYAYDLDDVAVRVAQENIDLNQGTDNIHVAAGDLLKEVSQEADVIVANILADILVLLTDDAYRLVKKEGYLILSGIISEKLDMVLEAAFSAGFFLETHMVQGEWNALVFKKTDDISGVIGG</sequence>
<keyword id="KW-0963">Cytoplasm</keyword>
<keyword id="KW-0489">Methyltransferase</keyword>
<keyword id="KW-0949">S-adenosyl-L-methionine</keyword>
<keyword id="KW-0808">Transferase</keyword>
<evidence type="ECO:0000255" key="1">
    <source>
        <dbReference type="HAMAP-Rule" id="MF_00735"/>
    </source>
</evidence>
<gene>
    <name evidence="1" type="primary">prmA</name>
    <name type="ordered locus">SPs1710</name>
</gene>
<comment type="function">
    <text evidence="1">Methylates ribosomal protein L11.</text>
</comment>
<comment type="catalytic activity">
    <reaction evidence="1">
        <text>L-lysyl-[protein] + 3 S-adenosyl-L-methionine = N(6),N(6),N(6)-trimethyl-L-lysyl-[protein] + 3 S-adenosyl-L-homocysteine + 3 H(+)</text>
        <dbReference type="Rhea" id="RHEA:54192"/>
        <dbReference type="Rhea" id="RHEA-COMP:9752"/>
        <dbReference type="Rhea" id="RHEA-COMP:13826"/>
        <dbReference type="ChEBI" id="CHEBI:15378"/>
        <dbReference type="ChEBI" id="CHEBI:29969"/>
        <dbReference type="ChEBI" id="CHEBI:57856"/>
        <dbReference type="ChEBI" id="CHEBI:59789"/>
        <dbReference type="ChEBI" id="CHEBI:61961"/>
    </reaction>
</comment>
<comment type="subcellular location">
    <subcellularLocation>
        <location evidence="1">Cytoplasm</location>
    </subcellularLocation>
</comment>
<comment type="similarity">
    <text evidence="1">Belongs to the methyltransferase superfamily. PrmA family.</text>
</comment>
<feature type="chain" id="PRO_0000411447" description="Ribosomal protein L11 methyltransferase">
    <location>
        <begin position="1"/>
        <end position="317"/>
    </location>
</feature>
<feature type="binding site" evidence="1">
    <location>
        <position position="158"/>
    </location>
    <ligand>
        <name>S-adenosyl-L-methionine</name>
        <dbReference type="ChEBI" id="CHEBI:59789"/>
    </ligand>
</feature>
<feature type="binding site" evidence="1">
    <location>
        <position position="179"/>
    </location>
    <ligand>
        <name>S-adenosyl-L-methionine</name>
        <dbReference type="ChEBI" id="CHEBI:59789"/>
    </ligand>
</feature>
<feature type="binding site" evidence="1">
    <location>
        <position position="201"/>
    </location>
    <ligand>
        <name>S-adenosyl-L-methionine</name>
        <dbReference type="ChEBI" id="CHEBI:59789"/>
    </ligand>
</feature>
<feature type="binding site" evidence="1">
    <location>
        <position position="244"/>
    </location>
    <ligand>
        <name>S-adenosyl-L-methionine</name>
        <dbReference type="ChEBI" id="CHEBI:59789"/>
    </ligand>
</feature>